<gene>
    <name evidence="1" type="primary">tgl</name>
    <name type="ordered locus">BCB4264_A4066</name>
</gene>
<protein>
    <recommendedName>
        <fullName evidence="1">Protein-glutamine gamma-glutamyltransferase</fullName>
        <ecNumber evidence="1">2.3.2.13</ecNumber>
    </recommendedName>
    <alternativeName>
        <fullName evidence="1">Transglutaminase</fullName>
        <shortName evidence="1">TGase</shortName>
    </alternativeName>
</protein>
<organism>
    <name type="scientific">Bacillus cereus (strain B4264)</name>
    <dbReference type="NCBI Taxonomy" id="405532"/>
    <lineage>
        <taxon>Bacteria</taxon>
        <taxon>Bacillati</taxon>
        <taxon>Bacillota</taxon>
        <taxon>Bacilli</taxon>
        <taxon>Bacillales</taxon>
        <taxon>Bacillaceae</taxon>
        <taxon>Bacillus</taxon>
        <taxon>Bacillus cereus group</taxon>
    </lineage>
</organism>
<feature type="chain" id="PRO_1000197965" description="Protein-glutamine gamma-glutamyltransferase">
    <location>
        <begin position="1"/>
        <end position="276"/>
    </location>
</feature>
<evidence type="ECO:0000255" key="1">
    <source>
        <dbReference type="HAMAP-Rule" id="MF_00727"/>
    </source>
</evidence>
<reference key="1">
    <citation type="submission" date="2008-10" db="EMBL/GenBank/DDBJ databases">
        <title>Genome sequence of Bacillus cereus B4264.</title>
        <authorList>
            <person name="Dodson R.J."/>
            <person name="Durkin A.S."/>
            <person name="Rosovitz M.J."/>
            <person name="Rasko D.A."/>
            <person name="Hoffmaster A."/>
            <person name="Ravel J."/>
            <person name="Sutton G."/>
        </authorList>
    </citation>
    <scope>NUCLEOTIDE SEQUENCE [LARGE SCALE GENOMIC DNA]</scope>
    <source>
        <strain>B4264</strain>
    </source>
</reference>
<name>TGL_BACC4</name>
<sequence>MIVIGRSIVHPYITNEYEPFAAEKQQILSIMAGNQEVYSFRTADELSFDLNLRVNIIISALELFQSGFQFRTFQQSFCNPQYWKRTSLGGFELLPNIPPSIAIQDIFKNGKLYGTECATAMIIIFYKALLSLYEEETFNRLFANLLLYTWDYDQDLRLITKNGGDLVPGDLVYFKNPQVNPATIEWQGENTIYLGNFFFYGHGVGVKTKEEIIYSLNERRVPYAFISAFLTDTITRIDSRIMSQYASSSTPQTSISFIPIRDDAIVATVGHTTTIY</sequence>
<accession>B7H6V0</accession>
<comment type="function">
    <text evidence="1">Probably plays a role in the assembly of the spore coat proteins by catalyzing epsilon-(gamma-glutamyl)lysine cross-links.</text>
</comment>
<comment type="catalytic activity">
    <reaction evidence="1">
        <text>L-glutaminyl-[protein] + L-lysyl-[protein] = [protein]-L-lysyl-N(6)-5-L-glutamyl-[protein] + NH4(+)</text>
        <dbReference type="Rhea" id="RHEA:54816"/>
        <dbReference type="Rhea" id="RHEA-COMP:9752"/>
        <dbReference type="Rhea" id="RHEA-COMP:10207"/>
        <dbReference type="Rhea" id="RHEA-COMP:14005"/>
        <dbReference type="ChEBI" id="CHEBI:28938"/>
        <dbReference type="ChEBI" id="CHEBI:29969"/>
        <dbReference type="ChEBI" id="CHEBI:30011"/>
        <dbReference type="ChEBI" id="CHEBI:138370"/>
        <dbReference type="EC" id="2.3.2.13"/>
    </reaction>
</comment>
<comment type="similarity">
    <text evidence="1">Belongs to the bacillus TGase family.</text>
</comment>
<keyword id="KW-0012">Acyltransferase</keyword>
<keyword id="KW-0749">Sporulation</keyword>
<keyword id="KW-0808">Transferase</keyword>
<proteinExistence type="inferred from homology"/>
<dbReference type="EC" id="2.3.2.13" evidence="1"/>
<dbReference type="EMBL" id="CP001176">
    <property type="protein sequence ID" value="ACK62256.1"/>
    <property type="molecule type" value="Genomic_DNA"/>
</dbReference>
<dbReference type="RefSeq" id="WP_000635337.1">
    <property type="nucleotide sequence ID" value="NZ_VEHB01000002.1"/>
</dbReference>
<dbReference type="SMR" id="B7H6V0"/>
<dbReference type="KEGG" id="bcb:BCB4264_A4066"/>
<dbReference type="HOGENOM" id="CLU_088922_0_0_9"/>
<dbReference type="Proteomes" id="UP000007096">
    <property type="component" value="Chromosome"/>
</dbReference>
<dbReference type="GO" id="GO:0003810">
    <property type="term" value="F:protein-glutamine gamma-glutamyltransferase activity"/>
    <property type="evidence" value="ECO:0007669"/>
    <property type="project" value="UniProtKB-UniRule"/>
</dbReference>
<dbReference type="GO" id="GO:0030435">
    <property type="term" value="P:sporulation resulting in formation of a cellular spore"/>
    <property type="evidence" value="ECO:0007669"/>
    <property type="project" value="UniProtKB-UniRule"/>
</dbReference>
<dbReference type="HAMAP" id="MF_00727">
    <property type="entry name" value="Tgl"/>
    <property type="match status" value="1"/>
</dbReference>
<dbReference type="InterPro" id="IPR020916">
    <property type="entry name" value="Gln_gamma-glutamylTfrase_bac"/>
</dbReference>
<dbReference type="NCBIfam" id="NF002869">
    <property type="entry name" value="PRK03187.1"/>
    <property type="match status" value="1"/>
</dbReference>
<dbReference type="Pfam" id="PF20085">
    <property type="entry name" value="TGL"/>
    <property type="match status" value="1"/>
</dbReference>